<feature type="chain" id="PRO_0000172581" description="Phosphatidylglycerol--prolipoprotein diacylglyceryl transferase">
    <location>
        <begin position="1"/>
        <end position="288"/>
    </location>
</feature>
<feature type="transmembrane region" description="Helical" evidence="1">
    <location>
        <begin position="18"/>
        <end position="38"/>
    </location>
</feature>
<feature type="transmembrane region" description="Helical" evidence="1">
    <location>
        <begin position="68"/>
        <end position="88"/>
    </location>
</feature>
<feature type="transmembrane region" description="Helical" evidence="1">
    <location>
        <begin position="107"/>
        <end position="127"/>
    </location>
</feature>
<feature type="transmembrane region" description="Helical" evidence="1">
    <location>
        <begin position="135"/>
        <end position="155"/>
    </location>
</feature>
<feature type="transmembrane region" description="Helical" evidence="1">
    <location>
        <begin position="193"/>
        <end position="213"/>
    </location>
</feature>
<feature type="transmembrane region" description="Helical" evidence="1">
    <location>
        <begin position="222"/>
        <end position="242"/>
    </location>
</feature>
<feature type="transmembrane region" description="Helical" evidence="1">
    <location>
        <begin position="256"/>
        <end position="276"/>
    </location>
</feature>
<feature type="binding site" evidence="1">
    <location>
        <position position="156"/>
    </location>
    <ligand>
        <name>a 1,2-diacyl-sn-glycero-3-phospho-(1'-sn-glycerol)</name>
        <dbReference type="ChEBI" id="CHEBI:64716"/>
    </ligand>
</feature>
<evidence type="ECO:0000255" key="1">
    <source>
        <dbReference type="HAMAP-Rule" id="MF_01147"/>
    </source>
</evidence>
<evidence type="ECO:0000305" key="2"/>
<reference key="1">
    <citation type="journal article" date="1999" name="Nat. Genet.">
        <title>Comparative genomes of Chlamydia pneumoniae and C. trachomatis.</title>
        <authorList>
            <person name="Kalman S."/>
            <person name="Mitchell W.P."/>
            <person name="Marathe R."/>
            <person name="Lammel C.J."/>
            <person name="Fan J."/>
            <person name="Hyman R.W."/>
            <person name="Olinger L."/>
            <person name="Grimwood J."/>
            <person name="Davis R.W."/>
            <person name="Stephens R.S."/>
        </authorList>
    </citation>
    <scope>NUCLEOTIDE SEQUENCE [LARGE SCALE GENOMIC DNA]</scope>
    <source>
        <strain>CWL029</strain>
    </source>
</reference>
<reference key="2">
    <citation type="journal article" date="2000" name="Nucleic Acids Res.">
        <title>Genome sequences of Chlamydia trachomatis MoPn and Chlamydia pneumoniae AR39.</title>
        <authorList>
            <person name="Read T.D."/>
            <person name="Brunham R.C."/>
            <person name="Shen C."/>
            <person name="Gill S.R."/>
            <person name="Heidelberg J.F."/>
            <person name="White O."/>
            <person name="Hickey E.K."/>
            <person name="Peterson J.D."/>
            <person name="Utterback T.R."/>
            <person name="Berry K.J."/>
            <person name="Bass S."/>
            <person name="Linher K.D."/>
            <person name="Weidman J.F."/>
            <person name="Khouri H.M."/>
            <person name="Craven B."/>
            <person name="Bowman C."/>
            <person name="Dodson R.J."/>
            <person name="Gwinn M.L."/>
            <person name="Nelson W.C."/>
            <person name="DeBoy R.T."/>
            <person name="Kolonay J.F."/>
            <person name="McClarty G."/>
            <person name="Salzberg S.L."/>
            <person name="Eisen J.A."/>
            <person name="Fraser C.M."/>
        </authorList>
    </citation>
    <scope>NUCLEOTIDE SEQUENCE [LARGE SCALE GENOMIC DNA]</scope>
    <source>
        <strain>AR39</strain>
    </source>
</reference>
<reference key="3">
    <citation type="journal article" date="2000" name="Nucleic Acids Res.">
        <title>Comparison of whole genome sequences of Chlamydia pneumoniae J138 from Japan and CWL029 from USA.</title>
        <authorList>
            <person name="Shirai M."/>
            <person name="Hirakawa H."/>
            <person name="Kimoto M."/>
            <person name="Tabuchi M."/>
            <person name="Kishi F."/>
            <person name="Ouchi K."/>
            <person name="Shiba T."/>
            <person name="Ishii K."/>
            <person name="Hattori M."/>
            <person name="Kuhara S."/>
            <person name="Nakazawa T."/>
        </authorList>
    </citation>
    <scope>NUCLEOTIDE SEQUENCE [LARGE SCALE GENOMIC DNA]</scope>
    <source>
        <strain>J138</strain>
    </source>
</reference>
<reference key="4">
    <citation type="submission" date="2002-05" db="EMBL/GenBank/DDBJ databases">
        <title>The genome sequence of Chlamydia pneumoniae TW183 and comparison with other Chlamydia strains based on whole genome sequence analysis.</title>
        <authorList>
            <person name="Geng M.M."/>
            <person name="Schuhmacher A."/>
            <person name="Muehldorfer I."/>
            <person name="Bensch K.W."/>
            <person name="Schaefer K.P."/>
            <person name="Schneider S."/>
            <person name="Pohl T."/>
            <person name="Essig A."/>
            <person name="Marre R."/>
            <person name="Melchers K."/>
        </authorList>
    </citation>
    <scope>NUCLEOTIDE SEQUENCE [LARGE SCALE GENOMIC DNA]</scope>
    <source>
        <strain>TW-183</strain>
    </source>
</reference>
<organism>
    <name type="scientific">Chlamydia pneumoniae</name>
    <name type="common">Chlamydophila pneumoniae</name>
    <dbReference type="NCBI Taxonomy" id="83558"/>
    <lineage>
        <taxon>Bacteria</taxon>
        <taxon>Pseudomonadati</taxon>
        <taxon>Chlamydiota</taxon>
        <taxon>Chlamydiia</taxon>
        <taxon>Chlamydiales</taxon>
        <taxon>Chlamydiaceae</taxon>
        <taxon>Chlamydia/Chlamydophila group</taxon>
        <taxon>Chlamydia</taxon>
    </lineage>
</organism>
<proteinExistence type="inferred from homology"/>
<dbReference type="EC" id="2.5.1.145" evidence="1"/>
<dbReference type="EMBL" id="AE001363">
    <property type="protein sequence ID" value="AAD18460.1"/>
    <property type="molecule type" value="Genomic_DNA"/>
</dbReference>
<dbReference type="EMBL" id="AE002161">
    <property type="protein sequence ID" value="AAF38285.1"/>
    <property type="status" value="ALT_INIT"/>
    <property type="molecule type" value="Genomic_DNA"/>
</dbReference>
<dbReference type="EMBL" id="BA000008">
    <property type="protein sequence ID" value="BAA98521.1"/>
    <property type="molecule type" value="Genomic_DNA"/>
</dbReference>
<dbReference type="EMBL" id="AE009440">
    <property type="protein sequence ID" value="AAP98253.1"/>
    <property type="molecule type" value="Genomic_DNA"/>
</dbReference>
<dbReference type="PIR" id="D81575">
    <property type="entry name" value="D81575"/>
</dbReference>
<dbReference type="PIR" id="G86529">
    <property type="entry name" value="G86529"/>
</dbReference>
<dbReference type="PIR" id="H72092">
    <property type="entry name" value="H72092"/>
</dbReference>
<dbReference type="RefSeq" id="NP_224516.1">
    <property type="nucleotide sequence ID" value="NC_000922.1"/>
</dbReference>
<dbReference type="RefSeq" id="WP_010882959.1">
    <property type="nucleotide sequence ID" value="NZ_LN847257.1"/>
</dbReference>
<dbReference type="SMR" id="Q9K266"/>
<dbReference type="STRING" id="406984.CPK_ORF00819"/>
<dbReference type="GeneID" id="45050360"/>
<dbReference type="KEGG" id="cpa:CP_0447"/>
<dbReference type="KEGG" id="cpj:lgt"/>
<dbReference type="KEGG" id="cpn:CPn_0311"/>
<dbReference type="KEGG" id="cpt:CpB0320"/>
<dbReference type="PATRIC" id="fig|115713.3.peg.345"/>
<dbReference type="eggNOG" id="COG0682">
    <property type="taxonomic scope" value="Bacteria"/>
</dbReference>
<dbReference type="HOGENOM" id="CLU_013386_1_0_0"/>
<dbReference type="OrthoDB" id="871140at2"/>
<dbReference type="UniPathway" id="UPA00664"/>
<dbReference type="Proteomes" id="UP000000583">
    <property type="component" value="Chromosome"/>
</dbReference>
<dbReference type="Proteomes" id="UP000000801">
    <property type="component" value="Chromosome"/>
</dbReference>
<dbReference type="GO" id="GO:0005886">
    <property type="term" value="C:plasma membrane"/>
    <property type="evidence" value="ECO:0007669"/>
    <property type="project" value="UniProtKB-SubCell"/>
</dbReference>
<dbReference type="GO" id="GO:0008961">
    <property type="term" value="F:phosphatidylglycerol-prolipoprotein diacylglyceryl transferase activity"/>
    <property type="evidence" value="ECO:0007669"/>
    <property type="project" value="UniProtKB-UniRule"/>
</dbReference>
<dbReference type="GO" id="GO:0042158">
    <property type="term" value="P:lipoprotein biosynthetic process"/>
    <property type="evidence" value="ECO:0007669"/>
    <property type="project" value="UniProtKB-UniRule"/>
</dbReference>
<dbReference type="HAMAP" id="MF_01147">
    <property type="entry name" value="Lgt"/>
    <property type="match status" value="1"/>
</dbReference>
<dbReference type="InterPro" id="IPR001640">
    <property type="entry name" value="Lgt"/>
</dbReference>
<dbReference type="NCBIfam" id="TIGR00544">
    <property type="entry name" value="lgt"/>
    <property type="match status" value="1"/>
</dbReference>
<dbReference type="NCBIfam" id="NF000775">
    <property type="entry name" value="PRK00052.2-5"/>
    <property type="match status" value="1"/>
</dbReference>
<dbReference type="PANTHER" id="PTHR30589:SF0">
    <property type="entry name" value="PHOSPHATIDYLGLYCEROL--PROLIPOPROTEIN DIACYLGLYCERYL TRANSFERASE"/>
    <property type="match status" value="1"/>
</dbReference>
<dbReference type="PANTHER" id="PTHR30589">
    <property type="entry name" value="PROLIPOPROTEIN DIACYLGLYCERYL TRANSFERASE"/>
    <property type="match status" value="1"/>
</dbReference>
<dbReference type="Pfam" id="PF01790">
    <property type="entry name" value="LGT"/>
    <property type="match status" value="1"/>
</dbReference>
<sequence>MAVIYWDRSKIVWSFEPWSLRLTWYGVFFTVGIFLACLSARYLALSYYGLKDHLSFSKSQLRVALENFFIYSILFIVPGARLAYVIFYGWSFYLQHPEEIIQIWHGGLSSHGGVLGFLLWAAIFSWIYKKKISKLTFLFLTDLCGSVFGIAAFFIRLGNFWNQEIVGTPTSLPWGVVFSDPMQGVQGVPVHPVQLYEGISYLVVSGILYFLSYKRYLHLGKGYVTSIACISVAFIRFFAEYVKSHQGKVLAEDCLLTIGQILSIPLFLFGVALLIICSLKARRHRSHI</sequence>
<name>LGT_CHLPN</name>
<keyword id="KW-0997">Cell inner membrane</keyword>
<keyword id="KW-1003">Cell membrane</keyword>
<keyword id="KW-0472">Membrane</keyword>
<keyword id="KW-0808">Transferase</keyword>
<keyword id="KW-0812">Transmembrane</keyword>
<keyword id="KW-1133">Transmembrane helix</keyword>
<accession>Q9K266</accession>
<accession>Q9Z8M7</accession>
<protein>
    <recommendedName>
        <fullName evidence="1">Phosphatidylglycerol--prolipoprotein diacylglyceryl transferase</fullName>
        <ecNumber evidence="1">2.5.1.145</ecNumber>
    </recommendedName>
</protein>
<comment type="function">
    <text evidence="1">Catalyzes the transfer of the diacylglyceryl group from phosphatidylglycerol to the sulfhydryl group of the N-terminal cysteine of a prolipoprotein, the first step in the formation of mature lipoproteins.</text>
</comment>
<comment type="catalytic activity">
    <reaction evidence="1">
        <text>L-cysteinyl-[prolipoprotein] + a 1,2-diacyl-sn-glycero-3-phospho-(1'-sn-glycerol) = an S-1,2-diacyl-sn-glyceryl-L-cysteinyl-[prolipoprotein] + sn-glycerol 1-phosphate + H(+)</text>
        <dbReference type="Rhea" id="RHEA:56712"/>
        <dbReference type="Rhea" id="RHEA-COMP:14679"/>
        <dbReference type="Rhea" id="RHEA-COMP:14680"/>
        <dbReference type="ChEBI" id="CHEBI:15378"/>
        <dbReference type="ChEBI" id="CHEBI:29950"/>
        <dbReference type="ChEBI" id="CHEBI:57685"/>
        <dbReference type="ChEBI" id="CHEBI:64716"/>
        <dbReference type="ChEBI" id="CHEBI:140658"/>
        <dbReference type="EC" id="2.5.1.145"/>
    </reaction>
</comment>
<comment type="pathway">
    <text evidence="1">Protein modification; lipoprotein biosynthesis (diacylglyceryl transfer).</text>
</comment>
<comment type="subcellular location">
    <subcellularLocation>
        <location evidence="1">Cell inner membrane</location>
        <topology evidence="1">Multi-pass membrane protein</topology>
    </subcellularLocation>
</comment>
<comment type="similarity">
    <text evidence="1">Belongs to the Lgt family.</text>
</comment>
<comment type="sequence caution" evidence="2">
    <conflict type="erroneous initiation">
        <sequence resource="EMBL-CDS" id="AAF38285"/>
    </conflict>
</comment>
<gene>
    <name evidence="1" type="primary">lgt</name>
    <name type="ordered locus">CPn_0311</name>
    <name type="ordered locus">CP_0447</name>
    <name type="ordered locus">CPj0311</name>
    <name type="ordered locus">CpB0320</name>
</gene>